<keyword id="KW-0963">Cytoplasm</keyword>
<keyword id="KW-0378">Hydrolase</keyword>
<keyword id="KW-1185">Reference proteome</keyword>
<name>URE2_KOCRD</name>
<dbReference type="EC" id="3.5.1.5" evidence="1"/>
<dbReference type="EMBL" id="AP009152">
    <property type="protein sequence ID" value="BAG30519.1"/>
    <property type="molecule type" value="Genomic_DNA"/>
</dbReference>
<dbReference type="RefSeq" id="WP_012399240.1">
    <property type="nucleotide sequence ID" value="NC_010617.1"/>
</dbReference>
<dbReference type="SMR" id="B2GI07"/>
<dbReference type="STRING" id="378753.KRH_21720"/>
<dbReference type="KEGG" id="krh:KRH_21720"/>
<dbReference type="eggNOG" id="COG0832">
    <property type="taxonomic scope" value="Bacteria"/>
</dbReference>
<dbReference type="HOGENOM" id="CLU_129707_1_1_11"/>
<dbReference type="OrthoDB" id="9797217at2"/>
<dbReference type="UniPathway" id="UPA00258">
    <property type="reaction ID" value="UER00370"/>
</dbReference>
<dbReference type="Proteomes" id="UP000008838">
    <property type="component" value="Chromosome"/>
</dbReference>
<dbReference type="GO" id="GO:0035550">
    <property type="term" value="C:urease complex"/>
    <property type="evidence" value="ECO:0007669"/>
    <property type="project" value="InterPro"/>
</dbReference>
<dbReference type="GO" id="GO:0009039">
    <property type="term" value="F:urease activity"/>
    <property type="evidence" value="ECO:0007669"/>
    <property type="project" value="UniProtKB-UniRule"/>
</dbReference>
<dbReference type="GO" id="GO:0043419">
    <property type="term" value="P:urea catabolic process"/>
    <property type="evidence" value="ECO:0007669"/>
    <property type="project" value="UniProtKB-UniRule"/>
</dbReference>
<dbReference type="CDD" id="cd00407">
    <property type="entry name" value="Urease_beta"/>
    <property type="match status" value="1"/>
</dbReference>
<dbReference type="FunFam" id="2.10.150.10:FF:000001">
    <property type="entry name" value="Urease subunit beta"/>
    <property type="match status" value="1"/>
</dbReference>
<dbReference type="Gene3D" id="2.10.150.10">
    <property type="entry name" value="Urease, beta subunit"/>
    <property type="match status" value="1"/>
</dbReference>
<dbReference type="HAMAP" id="MF_01954">
    <property type="entry name" value="Urease_beta"/>
    <property type="match status" value="1"/>
</dbReference>
<dbReference type="InterPro" id="IPR002019">
    <property type="entry name" value="Urease_beta-like"/>
</dbReference>
<dbReference type="InterPro" id="IPR036461">
    <property type="entry name" value="Urease_betasu_sf"/>
</dbReference>
<dbReference type="InterPro" id="IPR050069">
    <property type="entry name" value="Urease_subunit"/>
</dbReference>
<dbReference type="NCBIfam" id="NF009682">
    <property type="entry name" value="PRK13203.1"/>
    <property type="match status" value="1"/>
</dbReference>
<dbReference type="NCBIfam" id="TIGR00192">
    <property type="entry name" value="urease_beta"/>
    <property type="match status" value="1"/>
</dbReference>
<dbReference type="PANTHER" id="PTHR33569">
    <property type="entry name" value="UREASE"/>
    <property type="match status" value="1"/>
</dbReference>
<dbReference type="PANTHER" id="PTHR33569:SF1">
    <property type="entry name" value="UREASE"/>
    <property type="match status" value="1"/>
</dbReference>
<dbReference type="Pfam" id="PF00699">
    <property type="entry name" value="Urease_beta"/>
    <property type="match status" value="1"/>
</dbReference>
<dbReference type="SUPFAM" id="SSF51278">
    <property type="entry name" value="Urease, beta-subunit"/>
    <property type="match status" value="1"/>
</dbReference>
<gene>
    <name evidence="1" type="primary">ureB</name>
    <name type="ordered locus">KRH_21720</name>
</gene>
<organism>
    <name type="scientific">Kocuria rhizophila (strain ATCC 9341 / DSM 348 / NBRC 103217 / DC2201)</name>
    <dbReference type="NCBI Taxonomy" id="378753"/>
    <lineage>
        <taxon>Bacteria</taxon>
        <taxon>Bacillati</taxon>
        <taxon>Actinomycetota</taxon>
        <taxon>Actinomycetes</taxon>
        <taxon>Micrococcales</taxon>
        <taxon>Micrococcaceae</taxon>
        <taxon>Kocuria</taxon>
    </lineage>
</organism>
<reference key="1">
    <citation type="journal article" date="2008" name="J. Bacteriol.">
        <title>Complete genome sequence of the soil actinomycete Kocuria rhizophila.</title>
        <authorList>
            <person name="Takarada H."/>
            <person name="Sekine M."/>
            <person name="Kosugi H."/>
            <person name="Matsuo Y."/>
            <person name="Fujisawa T."/>
            <person name="Omata S."/>
            <person name="Kishi E."/>
            <person name="Shimizu A."/>
            <person name="Tsukatani N."/>
            <person name="Tanikawa S."/>
            <person name="Fujita N."/>
            <person name="Harayama S."/>
        </authorList>
    </citation>
    <scope>NUCLEOTIDE SEQUENCE [LARGE SCALE GENOMIC DNA]</scope>
    <source>
        <strain>ATCC 9341 / DSM 348 / NBRC 103217 / DC2201</strain>
    </source>
</reference>
<sequence>MTPGEYVLADTPVVCNAGREAITLEVLNRGDRPVQVGSHFHFAEANRALDFDRERATGHRLDIPAGTAVRLEPGDSTTVRLIPLGGDRVVHGFRDLVDGPLDPAAGVTSDEDAASAVVPRGAETSEREARA</sequence>
<accession>B2GI07</accession>
<feature type="chain" id="PRO_1000188926" description="Urease subunit beta">
    <location>
        <begin position="1"/>
        <end position="131"/>
    </location>
</feature>
<feature type="region of interest" description="Disordered" evidence="2">
    <location>
        <begin position="100"/>
        <end position="131"/>
    </location>
</feature>
<comment type="catalytic activity">
    <reaction evidence="1">
        <text>urea + 2 H2O + H(+) = hydrogencarbonate + 2 NH4(+)</text>
        <dbReference type="Rhea" id="RHEA:20557"/>
        <dbReference type="ChEBI" id="CHEBI:15377"/>
        <dbReference type="ChEBI" id="CHEBI:15378"/>
        <dbReference type="ChEBI" id="CHEBI:16199"/>
        <dbReference type="ChEBI" id="CHEBI:17544"/>
        <dbReference type="ChEBI" id="CHEBI:28938"/>
        <dbReference type="EC" id="3.5.1.5"/>
    </reaction>
</comment>
<comment type="pathway">
    <text evidence="1">Nitrogen metabolism; urea degradation; CO(2) and NH(3) from urea (urease route): step 1/1.</text>
</comment>
<comment type="subunit">
    <text evidence="1">Heterotrimer of UreA (gamma), UreB (beta) and UreC (alpha) subunits. Three heterotrimers associate to form the active enzyme.</text>
</comment>
<comment type="subcellular location">
    <subcellularLocation>
        <location evidence="1">Cytoplasm</location>
    </subcellularLocation>
</comment>
<comment type="similarity">
    <text evidence="1">Belongs to the urease beta subunit family.</text>
</comment>
<proteinExistence type="inferred from homology"/>
<evidence type="ECO:0000255" key="1">
    <source>
        <dbReference type="HAMAP-Rule" id="MF_01954"/>
    </source>
</evidence>
<evidence type="ECO:0000256" key="2">
    <source>
        <dbReference type="SAM" id="MobiDB-lite"/>
    </source>
</evidence>
<protein>
    <recommendedName>
        <fullName evidence="1">Urease subunit beta</fullName>
        <ecNumber evidence="1">3.5.1.5</ecNumber>
    </recommendedName>
    <alternativeName>
        <fullName evidence="1">Urea amidohydrolase subunit beta</fullName>
    </alternativeName>
</protein>